<reference key="1">
    <citation type="journal article" date="2008" name="J. Bacteriol.">
        <title>The complete genome sequence of Escherichia coli DH10B: insights into the biology of a laboratory workhorse.</title>
        <authorList>
            <person name="Durfee T."/>
            <person name="Nelson R."/>
            <person name="Baldwin S."/>
            <person name="Plunkett G. III"/>
            <person name="Burland V."/>
            <person name="Mau B."/>
            <person name="Petrosino J.F."/>
            <person name="Qin X."/>
            <person name="Muzny D.M."/>
            <person name="Ayele M."/>
            <person name="Gibbs R.A."/>
            <person name="Csorgo B."/>
            <person name="Posfai G."/>
            <person name="Weinstock G.M."/>
            <person name="Blattner F.R."/>
        </authorList>
    </citation>
    <scope>NUCLEOTIDE SEQUENCE [LARGE SCALE GENOMIC DNA]</scope>
    <source>
        <strain>K12 / DH10B</strain>
    </source>
</reference>
<dbReference type="EMBL" id="CP000948">
    <property type="protein sequence ID" value="ACB04410.1"/>
    <property type="molecule type" value="Genomic_DNA"/>
</dbReference>
<dbReference type="RefSeq" id="WP_000399147.1">
    <property type="nucleotide sequence ID" value="NC_010473.1"/>
</dbReference>
<dbReference type="SMR" id="B1X6K0"/>
<dbReference type="KEGG" id="ecd:ECDH10B_3526"/>
<dbReference type="HOGENOM" id="CLU_005126_9_3_6"/>
<dbReference type="GO" id="GO:0005886">
    <property type="term" value="C:plasma membrane"/>
    <property type="evidence" value="ECO:0007669"/>
    <property type="project" value="UniProtKB-SubCell"/>
</dbReference>
<dbReference type="GO" id="GO:0015503">
    <property type="term" value="F:glutathione-regulated potassium exporter activity"/>
    <property type="evidence" value="ECO:0007669"/>
    <property type="project" value="UniProtKB-UniRule"/>
</dbReference>
<dbReference type="GO" id="GO:1902600">
    <property type="term" value="P:proton transmembrane transport"/>
    <property type="evidence" value="ECO:0007669"/>
    <property type="project" value="InterPro"/>
</dbReference>
<dbReference type="FunFam" id="1.20.1530.20:FF:000001">
    <property type="entry name" value="Glutathione-regulated potassium-efflux system protein KefB"/>
    <property type="match status" value="1"/>
</dbReference>
<dbReference type="FunFam" id="3.40.50.720:FF:000036">
    <property type="entry name" value="Glutathione-regulated potassium-efflux system protein KefB"/>
    <property type="match status" value="1"/>
</dbReference>
<dbReference type="Gene3D" id="1.20.1530.20">
    <property type="match status" value="1"/>
</dbReference>
<dbReference type="Gene3D" id="3.40.50.720">
    <property type="entry name" value="NAD(P)-binding Rossmann-like Domain"/>
    <property type="match status" value="1"/>
</dbReference>
<dbReference type="HAMAP" id="MF_01412">
    <property type="entry name" value="K_H_efflux_KefB"/>
    <property type="match status" value="1"/>
</dbReference>
<dbReference type="InterPro" id="IPR006153">
    <property type="entry name" value="Cation/H_exchanger_TM"/>
</dbReference>
<dbReference type="InterPro" id="IPR004771">
    <property type="entry name" value="K/H_exchanger"/>
</dbReference>
<dbReference type="InterPro" id="IPR020884">
    <property type="entry name" value="K_H_efflux_KefB"/>
</dbReference>
<dbReference type="InterPro" id="IPR038770">
    <property type="entry name" value="Na+/solute_symporter_sf"/>
</dbReference>
<dbReference type="InterPro" id="IPR036291">
    <property type="entry name" value="NAD(P)-bd_dom_sf"/>
</dbReference>
<dbReference type="InterPro" id="IPR003148">
    <property type="entry name" value="RCK_N"/>
</dbReference>
<dbReference type="NCBIfam" id="TIGR00932">
    <property type="entry name" value="2a37"/>
    <property type="match status" value="1"/>
</dbReference>
<dbReference type="NCBIfam" id="NF002973">
    <property type="entry name" value="PRK03659.1"/>
    <property type="match status" value="1"/>
</dbReference>
<dbReference type="PANTHER" id="PTHR46157">
    <property type="entry name" value="K(+) EFFLUX ANTIPORTER 3, CHLOROPLASTIC"/>
    <property type="match status" value="1"/>
</dbReference>
<dbReference type="PANTHER" id="PTHR46157:SF4">
    <property type="entry name" value="K(+) EFFLUX ANTIPORTER 3, CHLOROPLASTIC"/>
    <property type="match status" value="1"/>
</dbReference>
<dbReference type="Pfam" id="PF00999">
    <property type="entry name" value="Na_H_Exchanger"/>
    <property type="match status" value="1"/>
</dbReference>
<dbReference type="Pfam" id="PF02254">
    <property type="entry name" value="TrkA_N"/>
    <property type="match status" value="1"/>
</dbReference>
<dbReference type="SUPFAM" id="SSF51735">
    <property type="entry name" value="NAD(P)-binding Rossmann-fold domains"/>
    <property type="match status" value="1"/>
</dbReference>
<dbReference type="PROSITE" id="PS51201">
    <property type="entry name" value="RCK_N"/>
    <property type="match status" value="1"/>
</dbReference>
<comment type="function">
    <text evidence="1">Pore-forming subunit of a potassium efflux system that confers protection against electrophiles. Catalyzes K(+)/H(+) antiport.</text>
</comment>
<comment type="subunit">
    <text evidence="1">Interacts with the regulatory subunit KefG.</text>
</comment>
<comment type="subcellular location">
    <subcellularLocation>
        <location evidence="1">Cell inner membrane</location>
        <topology evidence="1">Multi-pass membrane protein</topology>
    </subcellularLocation>
</comment>
<comment type="similarity">
    <text evidence="1">Belongs to the monovalent cation:proton antiporter 2 (CPA2) transporter (TC 2.A.37) family. KefB subfamily.</text>
</comment>
<sequence length="601" mass="66411">MEGSDFLLAGVLFLFAAVAAVPLASRLGIGAVLGYLLAGIAIGPWGLGFISDVDEILHFSELGVVFLMFIIGLELNPSKLWQLRRSIFGVGAAQVLLSAALLAGLLMLTDFAWQAAVVGGIGLAMSSTAMALQLMREKGMNRSESGQLGFSVLLFQDLAVIPALALVPLLAGSADEHFDWMKVGMKVLAFVGMLIGGRYLLRPVFRFIAASGVREVFTAATLLLVLGSALFMDALGLSMALGTFIAGVLLAESEYRHELETAIDPFKGLLLGLFFISVGMSLNLGVLYTHLLWVVISVVVLVAVKILVLYLLARLYGVRSSERMQFAGVLSQGGEFAFVLFSTASSQRLFQGDQMALLLVTVTLSMMTTPLLMKLVDKWLSRQFNGPEEEDEKPWVNDDKPQVIVVGFGRFGQVIGRLLMANKMRITVLERDISAVNLMRKYGYKVYYGDATQVDLLRSAGAEAAESIVITCNEPEDTMKLVEICQQHFPHLHILARARGRVEAHELLQAGVTQFSRETFSSALELGRKTLVTLGMHPHQAQRAQLHFRRLDMRMLRELIPMHADTVQISRAREARRELEEIFQREMQQERRQLDGWDEFE</sequence>
<name>KEFB_ECODH</name>
<keyword id="KW-0050">Antiport</keyword>
<keyword id="KW-0997">Cell inner membrane</keyword>
<keyword id="KW-1003">Cell membrane</keyword>
<keyword id="KW-0406">Ion transport</keyword>
<keyword id="KW-0472">Membrane</keyword>
<keyword id="KW-0630">Potassium</keyword>
<keyword id="KW-0633">Potassium transport</keyword>
<keyword id="KW-0812">Transmembrane</keyword>
<keyword id="KW-1133">Transmembrane helix</keyword>
<keyword id="KW-0813">Transport</keyword>
<proteinExistence type="inferred from homology"/>
<organism>
    <name type="scientific">Escherichia coli (strain K12 / DH10B)</name>
    <dbReference type="NCBI Taxonomy" id="316385"/>
    <lineage>
        <taxon>Bacteria</taxon>
        <taxon>Pseudomonadati</taxon>
        <taxon>Pseudomonadota</taxon>
        <taxon>Gammaproteobacteria</taxon>
        <taxon>Enterobacterales</taxon>
        <taxon>Enterobacteriaceae</taxon>
        <taxon>Escherichia</taxon>
    </lineage>
</organism>
<gene>
    <name evidence="1" type="primary">kefB</name>
    <name type="ordered locus">ECDH10B_3526</name>
</gene>
<feature type="chain" id="PRO_1000145518" description="Glutathione-regulated potassium-efflux system protein KefB">
    <location>
        <begin position="1"/>
        <end position="601"/>
    </location>
</feature>
<feature type="transmembrane region" description="Helical" evidence="1">
    <location>
        <begin position="4"/>
        <end position="24"/>
    </location>
</feature>
<feature type="transmembrane region" description="Helical" evidence="1">
    <location>
        <begin position="29"/>
        <end position="49"/>
    </location>
</feature>
<feature type="transmembrane region" description="Helical" evidence="1">
    <location>
        <begin position="55"/>
        <end position="75"/>
    </location>
</feature>
<feature type="transmembrane region" description="Helical" evidence="1">
    <location>
        <begin position="87"/>
        <end position="107"/>
    </location>
</feature>
<feature type="transmembrane region" description="Helical" evidence="1">
    <location>
        <begin position="115"/>
        <end position="135"/>
    </location>
</feature>
<feature type="transmembrane region" description="Helical" evidence="1">
    <location>
        <begin position="152"/>
        <end position="172"/>
    </location>
</feature>
<feature type="transmembrane region" description="Helical" evidence="1">
    <location>
        <begin position="177"/>
        <end position="197"/>
    </location>
</feature>
<feature type="transmembrane region" description="Helical" evidence="1">
    <location>
        <begin position="207"/>
        <end position="227"/>
    </location>
</feature>
<feature type="transmembrane region" description="Helical" evidence="1">
    <location>
        <begin position="230"/>
        <end position="250"/>
    </location>
</feature>
<feature type="transmembrane region" description="Helical" evidence="1">
    <location>
        <begin position="268"/>
        <end position="288"/>
    </location>
</feature>
<feature type="transmembrane region" description="Helical" evidence="1">
    <location>
        <begin position="291"/>
        <end position="311"/>
    </location>
</feature>
<feature type="transmembrane region" description="Helical" evidence="1">
    <location>
        <begin position="324"/>
        <end position="344"/>
    </location>
</feature>
<feature type="transmembrane region" description="Helical" evidence="1">
    <location>
        <begin position="356"/>
        <end position="376"/>
    </location>
</feature>
<feature type="domain" description="RCK N-terminal" evidence="2">
    <location>
        <begin position="400"/>
        <end position="519"/>
    </location>
</feature>
<evidence type="ECO:0000255" key="1">
    <source>
        <dbReference type="HAMAP-Rule" id="MF_01412"/>
    </source>
</evidence>
<evidence type="ECO:0000255" key="2">
    <source>
        <dbReference type="PROSITE-ProRule" id="PRU00543"/>
    </source>
</evidence>
<protein>
    <recommendedName>
        <fullName evidence="1">Glutathione-regulated potassium-efflux system protein KefB</fullName>
    </recommendedName>
    <alternativeName>
        <fullName evidence="1">K(+)/H(+) antiporter</fullName>
    </alternativeName>
</protein>
<accession>B1X6K0</accession>